<dbReference type="EC" id="3.1.26.3" evidence="1"/>
<dbReference type="EMBL" id="CP001635">
    <property type="protein sequence ID" value="ACS18053.1"/>
    <property type="molecule type" value="Genomic_DNA"/>
</dbReference>
<dbReference type="SMR" id="C5CSF5"/>
<dbReference type="STRING" id="543728.Vapar_1402"/>
<dbReference type="KEGG" id="vap:Vapar_1402"/>
<dbReference type="eggNOG" id="COG0571">
    <property type="taxonomic scope" value="Bacteria"/>
</dbReference>
<dbReference type="HOGENOM" id="CLU_000907_1_1_4"/>
<dbReference type="OrthoDB" id="9805026at2"/>
<dbReference type="GO" id="GO:0005737">
    <property type="term" value="C:cytoplasm"/>
    <property type="evidence" value="ECO:0007669"/>
    <property type="project" value="UniProtKB-SubCell"/>
</dbReference>
<dbReference type="GO" id="GO:0003725">
    <property type="term" value="F:double-stranded RNA binding"/>
    <property type="evidence" value="ECO:0007669"/>
    <property type="project" value="TreeGrafter"/>
</dbReference>
<dbReference type="GO" id="GO:0046872">
    <property type="term" value="F:metal ion binding"/>
    <property type="evidence" value="ECO:0007669"/>
    <property type="project" value="UniProtKB-KW"/>
</dbReference>
<dbReference type="GO" id="GO:0004525">
    <property type="term" value="F:ribonuclease III activity"/>
    <property type="evidence" value="ECO:0007669"/>
    <property type="project" value="UniProtKB-UniRule"/>
</dbReference>
<dbReference type="GO" id="GO:0019843">
    <property type="term" value="F:rRNA binding"/>
    <property type="evidence" value="ECO:0007669"/>
    <property type="project" value="UniProtKB-KW"/>
</dbReference>
<dbReference type="GO" id="GO:0006397">
    <property type="term" value="P:mRNA processing"/>
    <property type="evidence" value="ECO:0007669"/>
    <property type="project" value="UniProtKB-UniRule"/>
</dbReference>
<dbReference type="GO" id="GO:0010468">
    <property type="term" value="P:regulation of gene expression"/>
    <property type="evidence" value="ECO:0007669"/>
    <property type="project" value="TreeGrafter"/>
</dbReference>
<dbReference type="GO" id="GO:0006364">
    <property type="term" value="P:rRNA processing"/>
    <property type="evidence" value="ECO:0007669"/>
    <property type="project" value="UniProtKB-UniRule"/>
</dbReference>
<dbReference type="GO" id="GO:0008033">
    <property type="term" value="P:tRNA processing"/>
    <property type="evidence" value="ECO:0007669"/>
    <property type="project" value="UniProtKB-KW"/>
</dbReference>
<dbReference type="CDD" id="cd10845">
    <property type="entry name" value="DSRM_RNAse_III_family"/>
    <property type="match status" value="1"/>
</dbReference>
<dbReference type="CDD" id="cd00593">
    <property type="entry name" value="RIBOc"/>
    <property type="match status" value="1"/>
</dbReference>
<dbReference type="FunFam" id="1.10.1520.10:FF:000001">
    <property type="entry name" value="Ribonuclease 3"/>
    <property type="match status" value="1"/>
</dbReference>
<dbReference type="Gene3D" id="3.30.160.20">
    <property type="match status" value="1"/>
</dbReference>
<dbReference type="Gene3D" id="1.10.1520.10">
    <property type="entry name" value="Ribonuclease III domain"/>
    <property type="match status" value="1"/>
</dbReference>
<dbReference type="HAMAP" id="MF_00104">
    <property type="entry name" value="RNase_III"/>
    <property type="match status" value="1"/>
</dbReference>
<dbReference type="InterPro" id="IPR014720">
    <property type="entry name" value="dsRBD_dom"/>
</dbReference>
<dbReference type="InterPro" id="IPR011907">
    <property type="entry name" value="RNase_III"/>
</dbReference>
<dbReference type="InterPro" id="IPR000999">
    <property type="entry name" value="RNase_III_dom"/>
</dbReference>
<dbReference type="InterPro" id="IPR036389">
    <property type="entry name" value="RNase_III_sf"/>
</dbReference>
<dbReference type="NCBIfam" id="TIGR02191">
    <property type="entry name" value="RNaseIII"/>
    <property type="match status" value="1"/>
</dbReference>
<dbReference type="PANTHER" id="PTHR11207:SF0">
    <property type="entry name" value="RIBONUCLEASE 3"/>
    <property type="match status" value="1"/>
</dbReference>
<dbReference type="PANTHER" id="PTHR11207">
    <property type="entry name" value="RIBONUCLEASE III"/>
    <property type="match status" value="1"/>
</dbReference>
<dbReference type="Pfam" id="PF00035">
    <property type="entry name" value="dsrm"/>
    <property type="match status" value="1"/>
</dbReference>
<dbReference type="Pfam" id="PF14622">
    <property type="entry name" value="Ribonucleas_3_3"/>
    <property type="match status" value="1"/>
</dbReference>
<dbReference type="SMART" id="SM00358">
    <property type="entry name" value="DSRM"/>
    <property type="match status" value="1"/>
</dbReference>
<dbReference type="SMART" id="SM00535">
    <property type="entry name" value="RIBOc"/>
    <property type="match status" value="1"/>
</dbReference>
<dbReference type="SUPFAM" id="SSF54768">
    <property type="entry name" value="dsRNA-binding domain-like"/>
    <property type="match status" value="1"/>
</dbReference>
<dbReference type="SUPFAM" id="SSF69065">
    <property type="entry name" value="RNase III domain-like"/>
    <property type="match status" value="1"/>
</dbReference>
<dbReference type="PROSITE" id="PS50137">
    <property type="entry name" value="DS_RBD"/>
    <property type="match status" value="1"/>
</dbReference>
<dbReference type="PROSITE" id="PS00517">
    <property type="entry name" value="RNASE_3_1"/>
    <property type="match status" value="1"/>
</dbReference>
<dbReference type="PROSITE" id="PS50142">
    <property type="entry name" value="RNASE_3_2"/>
    <property type="match status" value="1"/>
</dbReference>
<evidence type="ECO:0000255" key="1">
    <source>
        <dbReference type="HAMAP-Rule" id="MF_00104"/>
    </source>
</evidence>
<gene>
    <name evidence="1" type="primary">rnc</name>
    <name type="ordered locus">Vapar_1402</name>
</gene>
<protein>
    <recommendedName>
        <fullName evidence="1">Ribonuclease 3</fullName>
        <ecNumber evidence="1">3.1.26.3</ecNumber>
    </recommendedName>
    <alternativeName>
        <fullName evidence="1">Ribonuclease III</fullName>
        <shortName evidence="1">RNase III</shortName>
    </alternativeName>
</protein>
<keyword id="KW-0963">Cytoplasm</keyword>
<keyword id="KW-0255">Endonuclease</keyword>
<keyword id="KW-0378">Hydrolase</keyword>
<keyword id="KW-0460">Magnesium</keyword>
<keyword id="KW-0479">Metal-binding</keyword>
<keyword id="KW-0507">mRNA processing</keyword>
<keyword id="KW-0540">Nuclease</keyword>
<keyword id="KW-0694">RNA-binding</keyword>
<keyword id="KW-0698">rRNA processing</keyword>
<keyword id="KW-0699">rRNA-binding</keyword>
<keyword id="KW-0819">tRNA processing</keyword>
<organism>
    <name type="scientific">Variovorax paradoxus (strain S110)</name>
    <dbReference type="NCBI Taxonomy" id="543728"/>
    <lineage>
        <taxon>Bacteria</taxon>
        <taxon>Pseudomonadati</taxon>
        <taxon>Pseudomonadota</taxon>
        <taxon>Betaproteobacteria</taxon>
        <taxon>Burkholderiales</taxon>
        <taxon>Comamonadaceae</taxon>
        <taxon>Variovorax</taxon>
    </lineage>
</organism>
<feature type="chain" id="PRO_1000202847" description="Ribonuclease 3">
    <location>
        <begin position="1"/>
        <end position="228"/>
    </location>
</feature>
<feature type="domain" description="RNase III" evidence="1">
    <location>
        <begin position="5"/>
        <end position="127"/>
    </location>
</feature>
<feature type="domain" description="DRBM" evidence="1">
    <location>
        <begin position="154"/>
        <end position="224"/>
    </location>
</feature>
<feature type="active site" evidence="1">
    <location>
        <position position="44"/>
    </location>
</feature>
<feature type="active site" evidence="1">
    <location>
        <position position="116"/>
    </location>
</feature>
<feature type="binding site" evidence="1">
    <location>
        <position position="40"/>
    </location>
    <ligand>
        <name>Mg(2+)</name>
        <dbReference type="ChEBI" id="CHEBI:18420"/>
    </ligand>
</feature>
<feature type="binding site" evidence="1">
    <location>
        <position position="113"/>
    </location>
    <ligand>
        <name>Mg(2+)</name>
        <dbReference type="ChEBI" id="CHEBI:18420"/>
    </ligand>
</feature>
<feature type="binding site" evidence="1">
    <location>
        <position position="116"/>
    </location>
    <ligand>
        <name>Mg(2+)</name>
        <dbReference type="ChEBI" id="CHEBI:18420"/>
    </ligand>
</feature>
<name>RNC_VARPS</name>
<reference key="1">
    <citation type="journal article" date="2011" name="J. Bacteriol.">
        <title>Complete genome sequence of the metabolically versatile plant growth-promoting endophyte, Variovorax paradoxus S110.</title>
        <authorList>
            <person name="Han J.I."/>
            <person name="Choi H.K."/>
            <person name="Lee S.W."/>
            <person name="Orwin P.M."/>
            <person name="Kim J."/>
            <person name="Laroe S.L."/>
            <person name="Kim T.G."/>
            <person name="O'Neil J."/>
            <person name="Leadbetter J.R."/>
            <person name="Lee S.Y."/>
            <person name="Hur C.G."/>
            <person name="Spain J.C."/>
            <person name="Ovchinnikova G."/>
            <person name="Goodwin L."/>
            <person name="Han C."/>
        </authorList>
    </citation>
    <scope>NUCLEOTIDE SEQUENCE [LARGE SCALE GENOMIC DNA]</scope>
    <source>
        <strain>S110</strain>
    </source>
</reference>
<proteinExistence type="inferred from homology"/>
<sequence>MDGGLTALQERLKHSFSDTRLLQLALTHRSFSADHNERLEFLGDSVLNLAVSHLLYTRLSALPEGDLSRVRANLVKQDTLHRLALELQLSPLLRLGEGEARSGGPNRPSILADALEALIGAVYLDAGFSAAEALVRRLYESVEINPRMDAVAKDPKTELQEWLQGHKMKLPVYRVAATLGAAHKQTFDVECEVPELGLRERGIGGSRRAGEQAAAAAMLIRLKARGAA</sequence>
<accession>C5CSF5</accession>
<comment type="function">
    <text evidence="1">Digests double-stranded RNA. Involved in the processing of primary rRNA transcript to yield the immediate precursors to the large and small rRNAs (23S and 16S). Processes some mRNAs, and tRNAs when they are encoded in the rRNA operon. Processes pre-crRNA and tracrRNA of type II CRISPR loci if present in the organism.</text>
</comment>
<comment type="catalytic activity">
    <reaction evidence="1">
        <text>Endonucleolytic cleavage to 5'-phosphomonoester.</text>
        <dbReference type="EC" id="3.1.26.3"/>
    </reaction>
</comment>
<comment type="cofactor">
    <cofactor evidence="1">
        <name>Mg(2+)</name>
        <dbReference type="ChEBI" id="CHEBI:18420"/>
    </cofactor>
</comment>
<comment type="subunit">
    <text evidence="1">Homodimer.</text>
</comment>
<comment type="subcellular location">
    <subcellularLocation>
        <location evidence="1">Cytoplasm</location>
    </subcellularLocation>
</comment>
<comment type="similarity">
    <text evidence="1">Belongs to the ribonuclease III family.</text>
</comment>